<organism>
    <name type="scientific">Mus musculus</name>
    <name type="common">Mouse</name>
    <dbReference type="NCBI Taxonomy" id="10090"/>
    <lineage>
        <taxon>Eukaryota</taxon>
        <taxon>Metazoa</taxon>
        <taxon>Chordata</taxon>
        <taxon>Craniata</taxon>
        <taxon>Vertebrata</taxon>
        <taxon>Euteleostomi</taxon>
        <taxon>Mammalia</taxon>
        <taxon>Eutheria</taxon>
        <taxon>Euarchontoglires</taxon>
        <taxon>Glires</taxon>
        <taxon>Rodentia</taxon>
        <taxon>Myomorpha</taxon>
        <taxon>Muroidea</taxon>
        <taxon>Muridae</taxon>
        <taxon>Murinae</taxon>
        <taxon>Mus</taxon>
        <taxon>Mus</taxon>
    </lineage>
</organism>
<sequence length="295" mass="33594">MNLVEWIVTIIMMTEFLLGNCANVFITIVNFIDCVKRRKISSADRIITAIAIFRIGLLWAMLTNWHSHVFTPDTDNLQMRVFGGITWAITNHFTTWLGTILSMFYLFKIANFSNSLFLHLKRKLDNVLLVIFLGSSLFLVAYLGMVNIKKIAWMSIHEGNVTTKSKLKHVTSITNMLLFSLINIVPFGISLNCVLLLIYSLSKHLKNMKFYGKGCQDQSTMVHIKALQTVVSFLLLYATYSSCVIISGWSLQNAPVFLFCVTIGSFYPAGHSCILIWGNQKLKQVFLLLLRQMRC</sequence>
<name>TR120_MOUSE</name>
<gene>
    <name evidence="5" type="primary">Tas2r120</name>
    <name evidence="2" type="synonym">T2r47</name>
</gene>
<proteinExistence type="evidence at protein level"/>
<dbReference type="EMBL" id="AC129318">
    <property type="status" value="NOT_ANNOTATED_CDS"/>
    <property type="molecule type" value="Genomic_DNA"/>
</dbReference>
<dbReference type="EMBL" id="BK001076">
    <property type="protein sequence ID" value="DAA01215.1"/>
    <property type="molecule type" value="Genomic_DNA"/>
</dbReference>
<dbReference type="CCDS" id="CCDS20617.1"/>
<dbReference type="RefSeq" id="NP_996906.1">
    <property type="nucleotide sequence ID" value="NM_207023.1"/>
</dbReference>
<dbReference type="SMR" id="Q7M721"/>
<dbReference type="FunCoup" id="Q7M721">
    <property type="interactions" value="137"/>
</dbReference>
<dbReference type="STRING" id="10090.ENSMUSP00000071626"/>
<dbReference type="GlyCosmos" id="Q7M721">
    <property type="glycosylation" value="1 site, No reported glycans"/>
</dbReference>
<dbReference type="GlyGen" id="Q7M721">
    <property type="glycosylation" value="1 site"/>
</dbReference>
<dbReference type="iPTMnet" id="Q7M721"/>
<dbReference type="PhosphoSitePlus" id="Q7M721"/>
<dbReference type="PaxDb" id="10090-ENSMUSP00000071626"/>
<dbReference type="DNASU" id="387348"/>
<dbReference type="Ensembl" id="ENSMUST00000071707.3">
    <property type="protein sequence ID" value="ENSMUSP00000071626.2"/>
    <property type="gene ID" value="ENSMUSG00000059382.3"/>
</dbReference>
<dbReference type="GeneID" id="387348"/>
<dbReference type="KEGG" id="mmu:387348"/>
<dbReference type="UCSC" id="uc009eji.1">
    <property type="organism name" value="mouse"/>
</dbReference>
<dbReference type="AGR" id="MGI:2681256"/>
<dbReference type="CTD" id="387348"/>
<dbReference type="MGI" id="MGI:2681256">
    <property type="gene designation" value="Tas2r120"/>
</dbReference>
<dbReference type="VEuPathDB" id="HostDB:ENSMUSG00000059382"/>
<dbReference type="eggNOG" id="ENOG502TE6U">
    <property type="taxonomic scope" value="Eukaryota"/>
</dbReference>
<dbReference type="GeneTree" id="ENSGT01100000263477"/>
<dbReference type="HOGENOM" id="CLU_072337_2_0_1"/>
<dbReference type="InParanoid" id="Q7M721"/>
<dbReference type="OMA" id="HFSSWLA"/>
<dbReference type="OrthoDB" id="8876749at2759"/>
<dbReference type="PhylomeDB" id="Q7M721"/>
<dbReference type="TreeFam" id="TF335891"/>
<dbReference type="Reactome" id="R-MMU-418594">
    <property type="pathway name" value="G alpha (i) signalling events"/>
</dbReference>
<dbReference type="Reactome" id="R-MMU-420499">
    <property type="pathway name" value="Class C/3 (Metabotropic glutamate/pheromone receptors)"/>
</dbReference>
<dbReference type="Reactome" id="R-MMU-9717207">
    <property type="pathway name" value="Sensory perception of sweet, bitter, and umami (glutamate) taste"/>
</dbReference>
<dbReference type="BioGRID-ORCS" id="387348">
    <property type="hits" value="2 hits in 76 CRISPR screens"/>
</dbReference>
<dbReference type="PRO" id="PR:Q7M721"/>
<dbReference type="Proteomes" id="UP000000589">
    <property type="component" value="Chromosome 6"/>
</dbReference>
<dbReference type="RNAct" id="Q7M721">
    <property type="molecule type" value="protein"/>
</dbReference>
<dbReference type="GO" id="GO:0016020">
    <property type="term" value="C:membrane"/>
    <property type="evidence" value="ECO:0007669"/>
    <property type="project" value="UniProtKB-SubCell"/>
</dbReference>
<dbReference type="GO" id="GO:0033038">
    <property type="term" value="F:bitter taste receptor activity"/>
    <property type="evidence" value="ECO:0007669"/>
    <property type="project" value="InterPro"/>
</dbReference>
<dbReference type="GO" id="GO:0004930">
    <property type="term" value="F:G protein-coupled receptor activity"/>
    <property type="evidence" value="ECO:0007669"/>
    <property type="project" value="UniProtKB-KW"/>
</dbReference>
<dbReference type="CDD" id="cd15027">
    <property type="entry name" value="7tm_TAS2R43-like"/>
    <property type="match status" value="1"/>
</dbReference>
<dbReference type="FunFam" id="1.20.1070.10:FF:000042">
    <property type="entry name" value="Taste receptor type 2 member 7"/>
    <property type="match status" value="1"/>
</dbReference>
<dbReference type="InterPro" id="IPR007960">
    <property type="entry name" value="TAS2R"/>
</dbReference>
<dbReference type="PANTHER" id="PTHR11394">
    <property type="entry name" value="TASTE RECEPTOR TYPE 2"/>
    <property type="match status" value="1"/>
</dbReference>
<dbReference type="PANTHER" id="PTHR11394:SF27">
    <property type="entry name" value="TASTE RECEPTOR TYPE 2 MEMBER 20"/>
    <property type="match status" value="1"/>
</dbReference>
<dbReference type="Pfam" id="PF05296">
    <property type="entry name" value="TAS2R"/>
    <property type="match status" value="1"/>
</dbReference>
<dbReference type="SUPFAM" id="SSF81321">
    <property type="entry name" value="Family A G protein-coupled receptor-like"/>
    <property type="match status" value="1"/>
</dbReference>
<keyword id="KW-0903">Direct protein sequencing</keyword>
<keyword id="KW-0297">G-protein coupled receptor</keyword>
<keyword id="KW-0325">Glycoprotein</keyword>
<keyword id="KW-0472">Membrane</keyword>
<keyword id="KW-0675">Receptor</keyword>
<keyword id="KW-1185">Reference proteome</keyword>
<keyword id="KW-0716">Sensory transduction</keyword>
<keyword id="KW-0919">Taste</keyword>
<keyword id="KW-0807">Transducer</keyword>
<keyword id="KW-0812">Transmembrane</keyword>
<keyword id="KW-1133">Transmembrane helix</keyword>
<protein>
    <recommendedName>
        <fullName>Taste receptor type 2 member 120</fullName>
        <shortName>T2R120</shortName>
        <shortName>mT2R47</shortName>
    </recommendedName>
</protein>
<feature type="chain" id="PRO_0000248479" description="Taste receptor type 2 member 120">
    <location>
        <begin position="1"/>
        <end position="295"/>
    </location>
</feature>
<feature type="topological domain" description="Extracellular" evidence="1">
    <location>
        <begin position="1"/>
        <end position="5"/>
    </location>
</feature>
<feature type="transmembrane region" description="Helical; Name=1" evidence="1">
    <location>
        <begin position="6"/>
        <end position="26"/>
    </location>
</feature>
<feature type="topological domain" description="Cytoplasmic" evidence="1">
    <location>
        <begin position="27"/>
        <end position="45"/>
    </location>
</feature>
<feature type="transmembrane region" description="Helical; Name=2" evidence="1">
    <location>
        <begin position="46"/>
        <end position="66"/>
    </location>
</feature>
<feature type="topological domain" description="Extracellular" evidence="1">
    <location>
        <begin position="67"/>
        <end position="80"/>
    </location>
</feature>
<feature type="transmembrane region" description="Helical; Name=3" evidence="1">
    <location>
        <begin position="81"/>
        <end position="101"/>
    </location>
</feature>
<feature type="topological domain" description="Cytoplasmic" evidence="1">
    <location>
        <begin position="102"/>
        <end position="127"/>
    </location>
</feature>
<feature type="transmembrane region" description="Helical; Name=4" evidence="1">
    <location>
        <begin position="128"/>
        <end position="148"/>
    </location>
</feature>
<feature type="topological domain" description="Extracellular" evidence="1">
    <location>
        <begin position="149"/>
        <end position="177"/>
    </location>
</feature>
<feature type="transmembrane region" description="Helical; Name=5" evidence="1">
    <location>
        <begin position="178"/>
        <end position="198"/>
    </location>
</feature>
<feature type="topological domain" description="Cytoplasmic" evidence="1">
    <location>
        <begin position="199"/>
        <end position="228"/>
    </location>
</feature>
<feature type="transmembrane region" description="Helical; Name=6" evidence="1">
    <location>
        <begin position="229"/>
        <end position="249"/>
    </location>
</feature>
<feature type="topological domain" description="Extracellular" evidence="1">
    <location>
        <begin position="250"/>
        <end position="255"/>
    </location>
</feature>
<feature type="transmembrane region" description="Helical; Name=7" evidence="1">
    <location>
        <begin position="256"/>
        <end position="276"/>
    </location>
</feature>
<feature type="topological domain" description="Cytoplasmic" evidence="1">
    <location>
        <begin position="277"/>
        <end position="295"/>
    </location>
</feature>
<feature type="glycosylation site" description="N-linked (GlcNAc...) asparagine" evidence="1">
    <location>
        <position position="160"/>
    </location>
</feature>
<accession>Q7M721</accession>
<comment type="function">
    <text evidence="3">Putative taste receptor which may play a role in the perception of bitterness.</text>
</comment>
<comment type="subcellular location">
    <subcellularLocation>
        <location evidence="3">Membrane</location>
        <topology evidence="3">Multi-pass membrane protein</topology>
    </subcellularLocation>
</comment>
<comment type="miscellaneous">
    <text evidence="3">Several bitter taste receptors are expressed in a single taste receptor cell.</text>
</comment>
<comment type="similarity">
    <text evidence="1">Belongs to the G-protein coupled receptor T2R family.</text>
</comment>
<reference key="1">
    <citation type="journal article" date="2009" name="PLoS Biol.">
        <title>Lineage-specific biology revealed by a finished genome assembly of the mouse.</title>
        <authorList>
            <person name="Church D.M."/>
            <person name="Goodstadt L."/>
            <person name="Hillier L.W."/>
            <person name="Zody M.C."/>
            <person name="Goldstein S."/>
            <person name="She X."/>
            <person name="Bult C.J."/>
            <person name="Agarwala R."/>
            <person name="Cherry J.L."/>
            <person name="DiCuccio M."/>
            <person name="Hlavina W."/>
            <person name="Kapustin Y."/>
            <person name="Meric P."/>
            <person name="Maglott D."/>
            <person name="Birtle Z."/>
            <person name="Marques A.C."/>
            <person name="Graves T."/>
            <person name="Zhou S."/>
            <person name="Teague B."/>
            <person name="Potamousis K."/>
            <person name="Churas C."/>
            <person name="Place M."/>
            <person name="Herschleb J."/>
            <person name="Runnheim R."/>
            <person name="Forrest D."/>
            <person name="Amos-Landgraf J."/>
            <person name="Schwartz D.C."/>
            <person name="Cheng Z."/>
            <person name="Lindblad-Toh K."/>
            <person name="Eichler E.E."/>
            <person name="Ponting C.P."/>
        </authorList>
    </citation>
    <scope>NUCLEOTIDE SEQUENCE [LARGE SCALE GENOMIC DNA]</scope>
    <source>
        <strain>C57BL/6J</strain>
    </source>
</reference>
<reference evidence="3" key="2">
    <citation type="submission" date="2009-01" db="UniProtKB">
        <authorList>
            <person name="Lubec G."/>
            <person name="Sunyer B."/>
            <person name="Chen W.-Q."/>
        </authorList>
    </citation>
    <scope>PROTEIN SEQUENCE OF 282-294</scope>
    <scope>IDENTIFICATION BY MASS SPECTROMETRY</scope>
    <source>
        <strain>OF1</strain>
        <tissue>Hippocampus</tissue>
    </source>
</reference>
<reference evidence="3 4" key="3">
    <citation type="journal article" date="2003" name="Mol. Biol. Evol.">
        <title>Adaptive diversification of bitter taste receptor genes in mammalian evolution.</title>
        <authorList>
            <person name="Shi P."/>
            <person name="Zhang J."/>
            <person name="Yang H."/>
            <person name="Zhang Y.-P."/>
        </authorList>
    </citation>
    <scope>IDENTIFICATION</scope>
</reference>
<evidence type="ECO:0000255" key="1"/>
<evidence type="ECO:0000303" key="2">
    <source>
    </source>
</evidence>
<evidence type="ECO:0000305" key="3"/>
<evidence type="ECO:0000312" key="4">
    <source>
        <dbReference type="EMBL" id="DAA01215.1"/>
    </source>
</evidence>
<evidence type="ECO:0000312" key="5">
    <source>
        <dbReference type="MGI" id="MGI:2681256"/>
    </source>
</evidence>